<dbReference type="EMBL" id="JPEQ01000015">
    <property type="protein sequence ID" value="KFF73457.1"/>
    <property type="molecule type" value="Genomic_DNA"/>
</dbReference>
<dbReference type="RefSeq" id="WP_050022392.1">
    <property type="nucleotide sequence ID" value="NZ_JPEQ01000015.1"/>
</dbReference>
<dbReference type="SMR" id="A0A086F3E3"/>
<dbReference type="GO" id="GO:0016020">
    <property type="term" value="C:membrane"/>
    <property type="evidence" value="ECO:0007669"/>
    <property type="project" value="UniProtKB-SubCell"/>
</dbReference>
<dbReference type="GO" id="GO:0042802">
    <property type="term" value="F:identical protein binding"/>
    <property type="evidence" value="ECO:0000353"/>
    <property type="project" value="IntAct"/>
</dbReference>
<dbReference type="GO" id="GO:0022841">
    <property type="term" value="F:potassium ion leak channel activity"/>
    <property type="evidence" value="ECO:0000304"/>
    <property type="project" value="UniProtKB"/>
</dbReference>
<dbReference type="GO" id="GO:0015252">
    <property type="term" value="F:proton channel activity"/>
    <property type="evidence" value="ECO:0007669"/>
    <property type="project" value="InterPro"/>
</dbReference>
<dbReference type="GO" id="GO:0071805">
    <property type="term" value="P:potassium ion transmembrane transport"/>
    <property type="evidence" value="ECO:0000304"/>
    <property type="project" value="UniProtKB"/>
</dbReference>
<dbReference type="InterPro" id="IPR010617">
    <property type="entry name" value="TMEM175-like"/>
</dbReference>
<dbReference type="PANTHER" id="PTHR31462">
    <property type="entry name" value="ENDOSOMAL/LYSOSOMAL POTASSIUM CHANNEL TMEM175"/>
    <property type="match status" value="1"/>
</dbReference>
<dbReference type="PANTHER" id="PTHR31462:SF5">
    <property type="entry name" value="ENDOSOMAL_LYSOSOMAL PROTON CHANNEL TMEM175"/>
    <property type="match status" value="1"/>
</dbReference>
<dbReference type="Pfam" id="PF06736">
    <property type="entry name" value="TMEM175"/>
    <property type="match status" value="1"/>
</dbReference>
<evidence type="ECO:0000250" key="1">
    <source>
        <dbReference type="UniProtKB" id="K9UJK2"/>
    </source>
</evidence>
<evidence type="ECO:0000250" key="2">
    <source>
        <dbReference type="UniProtKB" id="Q9BSA9"/>
    </source>
</evidence>
<evidence type="ECO:0000255" key="3"/>
<evidence type="ECO:0000269" key="4">
    <source>
    </source>
</evidence>
<evidence type="ECO:0000305" key="5"/>
<evidence type="ECO:0000305" key="6">
    <source>
    </source>
</evidence>
<evidence type="ECO:0000312" key="7">
    <source>
        <dbReference type="EMBL" id="KFF73457.1"/>
    </source>
</evidence>
<reference key="1">
    <citation type="submission" date="2014-07" db="EMBL/GenBank/DDBJ databases">
        <title>Chryseobacterium sp. P1-3 whole genome sequence.</title>
        <authorList>
            <person name="Park G.-S."/>
            <person name="Hong S.-J."/>
            <person name="Kwak Y."/>
            <person name="Choi J.-B."/>
            <person name="Jung B.K."/>
            <person name="Lee C.H."/>
            <person name="Shin J.-H."/>
        </authorList>
    </citation>
    <scope>NUCLEOTIDE SEQUENCE [LARGE SCALE GENOMIC DNA]</scope>
    <source>
        <strain evidence="7">P1-3</strain>
    </source>
</reference>
<reference key="2">
    <citation type="journal article" date="2015" name="Cell">
        <title>TMEM175 is an organelle K(+) channel regulating lysosomal function.</title>
        <authorList>
            <person name="Cang C."/>
            <person name="Aranda K."/>
            <person name="Seo Y.J."/>
            <person name="Gasnier B."/>
            <person name="Ren D."/>
        </authorList>
    </citation>
    <scope>FUNCTION</scope>
    <scope>TRANSPORTER ACTIVITY</scope>
</reference>
<reference key="3">
    <citation type="journal article" date="2017" name="Nature">
        <title>The lysosomal potassium channel TMEM175 adopts a novel tetrameric architecture.</title>
        <authorList>
            <person name="Lee C."/>
            <person name="Guo J."/>
            <person name="Zeng W."/>
            <person name="Kim S."/>
            <person name="She J."/>
            <person name="Cang C."/>
            <person name="Ren D."/>
            <person name="Jiang Y."/>
        </authorList>
    </citation>
    <scope>SUBUNIT</scope>
</reference>
<feature type="chain" id="PRO_0000434743" description="Potassium channel HX13_20290">
    <location>
        <begin position="1"/>
        <end position="192"/>
    </location>
</feature>
<feature type="transmembrane region" description="Helical; Name=TM1" evidence="1">
    <location>
        <begin position="1"/>
        <end position="24"/>
    </location>
</feature>
<feature type="topological domain" description="Cytoplasmic" evidence="1">
    <location>
        <position position="25"/>
    </location>
</feature>
<feature type="topological domain" description="Extracellular" evidence="1">
    <location>
        <begin position="26"/>
        <end position="39"/>
    </location>
</feature>
<feature type="transmembrane region" description="Helical; Name=TM2" evidence="1">
    <location>
        <begin position="40"/>
        <end position="65"/>
    </location>
</feature>
<feature type="topological domain" description="Cytoplasmic" evidence="1">
    <location>
        <begin position="66"/>
        <end position="71"/>
    </location>
</feature>
<feature type="transmembrane region" description="Helical; Name=TM3" evidence="1">
    <location>
        <begin position="72"/>
        <end position="93"/>
    </location>
</feature>
<feature type="topological domain" description="Extracellular" evidence="1">
    <location>
        <begin position="94"/>
        <end position="101"/>
    </location>
</feature>
<feature type="transmembrane region" description="Helical; Name=TM4" evidence="1">
    <location>
        <begin position="102"/>
        <end position="126"/>
    </location>
</feature>
<feature type="topological domain" description="Cytoplasmic" evidence="1">
    <location>
        <begin position="127"/>
        <end position="133"/>
    </location>
</feature>
<feature type="transmembrane region" description="Helical; Name=TM5" evidence="1">
    <location>
        <begin position="134"/>
        <end position="162"/>
    </location>
</feature>
<feature type="topological domain" description="Extracellular" evidence="1">
    <location>
        <begin position="163"/>
        <end position="164"/>
    </location>
</feature>
<feature type="transmembrane region" description="Helical; Name=TM6" evidence="1">
    <location>
        <begin position="165"/>
        <end position="180"/>
    </location>
</feature>
<feature type="topological domain" description="Cytoplasmic" evidence="1">
    <location>
        <begin position="181"/>
        <end position="192"/>
    </location>
</feature>
<feature type="region of interest" description="Short helix H1" evidence="1">
    <location>
        <begin position="26"/>
        <end position="29"/>
    </location>
</feature>
<feature type="region of interest" description="Short helix H2" evidence="1">
    <location>
        <begin position="31"/>
        <end position="37"/>
    </location>
</feature>
<feature type="short sequence motif" description="RxxxFSD motif" evidence="2">
    <location>
        <begin position="5"/>
        <end position="11"/>
    </location>
</feature>
<feature type="site" description="Hydrophobic filter residue 1" evidence="1">
    <location>
        <position position="16"/>
    </location>
</feature>
<feature type="site" description="Hydrophobic filter residue 2" evidence="1">
    <location>
        <position position="20"/>
    </location>
</feature>
<feature type="site" description="Hydrophobic filter residue 3" evidence="1">
    <location>
        <position position="23"/>
    </location>
</feature>
<comment type="function">
    <text evidence="6">Potassium channel.</text>
</comment>
<comment type="catalytic activity">
    <reaction evidence="6">
        <text>K(+)(in) = K(+)(out)</text>
        <dbReference type="Rhea" id="RHEA:29463"/>
        <dbReference type="ChEBI" id="CHEBI:29103"/>
    </reaction>
</comment>
<comment type="subunit">
    <text evidence="4">Homotetramer (PubMed:28723891).</text>
</comment>
<comment type="interaction">
    <interactant intactId="EBI-20710502">
        <id>A0A086F3E3</id>
    </interactant>
    <interactant intactId="EBI-20710502">
        <id>A0A086F3E3</id>
        <label>HX13_20290</label>
    </interactant>
    <organismsDiffer>false</organismsDiffer>
    <experiments>2</experiments>
</comment>
<comment type="subcellular location">
    <subcellularLocation>
        <location evidence="3">Membrane</location>
        <topology evidence="3">Multi-pass membrane protein</topology>
    </subcellularLocation>
</comment>
<comment type="domain">
    <text evidence="1">The six transmembrane regions are tightly packed within each subunit without undergoing domain swapping. Transmembranes TM1-TM3 are positioned on the inner circle of the channel tetramer and participate in inter-subunit interactions that are central to the assembly of the ion conduction pore. The RxxxFSD motif within transmembrane TM1 coordinates a network of specific inter- and intra-subunit interactions with other conserved residues on TM2 and TM3 and plays a key role in the tetrameric assembly of the channel. Transmembrane TM4-TM6 are positioned on the periphery of the channel and do not contribute to contacts with neighboring subunits. Transmembranes TM1 and TM2 are linked by an extended strand-like tail and two short helices (H1 and H2) which protrude outwards from the main body of the transmembrane domain and enclose the external open entrance of the ion conduction pore in the channel tetramer. Transmembrane TM1 forms the pore-lining inner helix at the center of the channel, creating an hourglass-shaped ion permeation pathway in the channel tetramer. Three hydrophobic residues on the C-terminal half of the TM1 helix form a bottleneck along the ion conduction pathway and serve as the selectivity filter of the channel. Ile-16 is probably responsible for channel selectivity.</text>
</comment>
<comment type="similarity">
    <text evidence="5">Belongs to the TMEM175 family.</text>
</comment>
<keyword id="KW-0407">Ion channel</keyword>
<keyword id="KW-0406">Ion transport</keyword>
<keyword id="KW-0472">Membrane</keyword>
<keyword id="KW-0630">Potassium</keyword>
<keyword id="KW-0631">Potassium channel</keyword>
<keyword id="KW-0633">Potassium transport</keyword>
<keyword id="KW-0812">Transmembrane</keyword>
<keyword id="KW-1133">Transmembrane helix</keyword>
<keyword id="KW-0813">Transport</keyword>
<sequence>MTKGRLEAFSDGVLAIIITIMVLELKVPEGSSWASLQPILPRFLAYIFSFIYVGIYWNNHHHLFQTVKKVNGSILWANLHLLFWLSLMPIATEWIGTSHFAQNPVATYGIGLIMSAIAYTILENVIIRCEGENSKLKEAIHSKFKEYISIIFYVLGIATSFFYPYIAIGFYYLVALIWLIPDKRIEKSLKEN</sequence>
<name>TM175_CHRP1</name>
<organism>
    <name type="scientific">Chryseobacterium sp. (strain P1-3)</name>
    <dbReference type="NCBI Taxonomy" id="1517683"/>
    <lineage>
        <taxon>Bacteria</taxon>
        <taxon>Pseudomonadati</taxon>
        <taxon>Bacteroidota</taxon>
        <taxon>Flavobacteriia</taxon>
        <taxon>Flavobacteriales</taxon>
        <taxon>Weeksellaceae</taxon>
        <taxon>Chryseobacterium group</taxon>
        <taxon>Chryseobacterium</taxon>
    </lineage>
</organism>
<protein>
    <recommendedName>
        <fullName evidence="5">Potassium channel HX13_20290</fullName>
    </recommendedName>
</protein>
<accession>A0A086F3E3</accession>
<gene>
    <name evidence="7" type="ORF">HX13_20290</name>
</gene>
<proteinExistence type="evidence at protein level"/>